<evidence type="ECO:0000255" key="1">
    <source>
        <dbReference type="HAMAP-Rule" id="MF_00282"/>
    </source>
</evidence>
<reference key="1">
    <citation type="journal article" date="1999" name="Genetics">
        <title>Divergence of the hyperthermophilic archaea Pyrococcus furiosus and P. horikoshii inferred from complete genomic sequences.</title>
        <authorList>
            <person name="Maeder D.L."/>
            <person name="Weiss R.B."/>
            <person name="Dunn D.M."/>
            <person name="Cherry J.L."/>
            <person name="Gonzalez J.M."/>
            <person name="DiRuggiero J."/>
            <person name="Robb F.T."/>
        </authorList>
    </citation>
    <scope>NUCLEOTIDE SEQUENCE [LARGE SCALE GENOMIC DNA]</scope>
    <source>
        <strain>ATCC 43587 / DSM 3638 / JCM 8422 / Vc1</strain>
    </source>
</reference>
<keyword id="KW-0030">Aminoacyl-tRNA synthetase</keyword>
<keyword id="KW-0067">ATP-binding</keyword>
<keyword id="KW-0963">Cytoplasm</keyword>
<keyword id="KW-0436">Ligase</keyword>
<keyword id="KW-0460">Magnesium</keyword>
<keyword id="KW-0479">Metal-binding</keyword>
<keyword id="KW-0547">Nucleotide-binding</keyword>
<keyword id="KW-0648">Protein biosynthesis</keyword>
<keyword id="KW-1185">Reference proteome</keyword>
<accession>Q8U261</accession>
<name>SYFA_PYRFU</name>
<feature type="chain" id="PRO_0000126816" description="Phenylalanine--tRNA ligase alpha subunit">
    <location>
        <begin position="1"/>
        <end position="499"/>
    </location>
</feature>
<feature type="binding site" evidence="1">
    <location>
        <position position="342"/>
    </location>
    <ligand>
        <name>L-phenylalanine</name>
        <dbReference type="ChEBI" id="CHEBI:58095"/>
    </ligand>
</feature>
<feature type="binding site" evidence="1">
    <location>
        <begin position="381"/>
        <end position="383"/>
    </location>
    <ligand>
        <name>L-phenylalanine</name>
        <dbReference type="ChEBI" id="CHEBI:58095"/>
    </ligand>
</feature>
<feature type="binding site" evidence="1">
    <location>
        <position position="422"/>
    </location>
    <ligand>
        <name>L-phenylalanine</name>
        <dbReference type="ChEBI" id="CHEBI:58095"/>
    </ligand>
</feature>
<feature type="binding site" evidence="1">
    <location>
        <position position="424"/>
    </location>
    <ligand>
        <name>Mg(2+)</name>
        <dbReference type="ChEBI" id="CHEBI:18420"/>
        <note>shared with beta subunit</note>
    </ligand>
</feature>
<feature type="binding site" evidence="1">
    <location>
        <position position="447"/>
    </location>
    <ligand>
        <name>L-phenylalanine</name>
        <dbReference type="ChEBI" id="CHEBI:58095"/>
    </ligand>
</feature>
<dbReference type="EC" id="6.1.1.20" evidence="1"/>
<dbReference type="EMBL" id="AE009950">
    <property type="protein sequence ID" value="AAL81113.1"/>
    <property type="molecule type" value="Genomic_DNA"/>
</dbReference>
<dbReference type="RefSeq" id="WP_011012126.1">
    <property type="nucleotide sequence ID" value="NZ_CP023154.1"/>
</dbReference>
<dbReference type="SMR" id="Q8U261"/>
<dbReference type="IntAct" id="Q8U261">
    <property type="interactions" value="1"/>
</dbReference>
<dbReference type="STRING" id="186497.PF0989"/>
<dbReference type="PaxDb" id="186497-PF0989"/>
<dbReference type="KEGG" id="pfu:PF0989"/>
<dbReference type="PATRIC" id="fig|186497.12.peg.1048"/>
<dbReference type="eggNOG" id="arCOG00410">
    <property type="taxonomic scope" value="Archaea"/>
</dbReference>
<dbReference type="HOGENOM" id="CLU_025086_2_2_2"/>
<dbReference type="OrthoDB" id="372178at2157"/>
<dbReference type="PhylomeDB" id="Q8U261"/>
<dbReference type="Proteomes" id="UP000001013">
    <property type="component" value="Chromosome"/>
</dbReference>
<dbReference type="GO" id="GO:0005737">
    <property type="term" value="C:cytoplasm"/>
    <property type="evidence" value="ECO:0007669"/>
    <property type="project" value="UniProtKB-SubCell"/>
</dbReference>
<dbReference type="GO" id="GO:0005524">
    <property type="term" value="F:ATP binding"/>
    <property type="evidence" value="ECO:0007669"/>
    <property type="project" value="UniProtKB-UniRule"/>
</dbReference>
<dbReference type="GO" id="GO:0000287">
    <property type="term" value="F:magnesium ion binding"/>
    <property type="evidence" value="ECO:0007669"/>
    <property type="project" value="UniProtKB-UniRule"/>
</dbReference>
<dbReference type="GO" id="GO:0004826">
    <property type="term" value="F:phenylalanine-tRNA ligase activity"/>
    <property type="evidence" value="ECO:0007669"/>
    <property type="project" value="UniProtKB-UniRule"/>
</dbReference>
<dbReference type="GO" id="GO:0000049">
    <property type="term" value="F:tRNA binding"/>
    <property type="evidence" value="ECO:0007669"/>
    <property type="project" value="InterPro"/>
</dbReference>
<dbReference type="GO" id="GO:0006432">
    <property type="term" value="P:phenylalanyl-tRNA aminoacylation"/>
    <property type="evidence" value="ECO:0007669"/>
    <property type="project" value="UniProtKB-UniRule"/>
</dbReference>
<dbReference type="CDD" id="cd00496">
    <property type="entry name" value="PheRS_alpha_core"/>
    <property type="match status" value="1"/>
</dbReference>
<dbReference type="FunFam" id="3.30.930.10:FF:000095">
    <property type="entry name" value="Phenylalanine--tRNA ligase alpha subunit"/>
    <property type="match status" value="1"/>
</dbReference>
<dbReference type="Gene3D" id="3.30.930.10">
    <property type="entry name" value="Bira Bifunctional Protein, Domain 2"/>
    <property type="match status" value="1"/>
</dbReference>
<dbReference type="Gene3D" id="1.10.10.10">
    <property type="entry name" value="Winged helix-like DNA-binding domain superfamily/Winged helix DNA-binding domain"/>
    <property type="match status" value="1"/>
</dbReference>
<dbReference type="HAMAP" id="MF_00282">
    <property type="entry name" value="Phe_tRNA_synth_alpha2"/>
    <property type="match status" value="1"/>
</dbReference>
<dbReference type="InterPro" id="IPR006195">
    <property type="entry name" value="aa-tRNA-synth_II"/>
</dbReference>
<dbReference type="InterPro" id="IPR045864">
    <property type="entry name" value="aa-tRNA-synth_II/BPL/LPL"/>
</dbReference>
<dbReference type="InterPro" id="IPR004529">
    <property type="entry name" value="Phe-tRNA-synth_IIc_asu"/>
</dbReference>
<dbReference type="InterPro" id="IPR022917">
    <property type="entry name" value="Phe_tRNA_ligase_alpha_bac/arc"/>
</dbReference>
<dbReference type="InterPro" id="IPR002319">
    <property type="entry name" value="Phenylalanyl-tRNA_Synthase"/>
</dbReference>
<dbReference type="InterPro" id="IPR036388">
    <property type="entry name" value="WH-like_DNA-bd_sf"/>
</dbReference>
<dbReference type="InterPro" id="IPR036390">
    <property type="entry name" value="WH_DNA-bd_sf"/>
</dbReference>
<dbReference type="NCBIfam" id="TIGR00468">
    <property type="entry name" value="pheS"/>
    <property type="match status" value="1"/>
</dbReference>
<dbReference type="NCBIfam" id="NF003210">
    <property type="entry name" value="PRK04172.1"/>
    <property type="match status" value="1"/>
</dbReference>
<dbReference type="PANTHER" id="PTHR11538:SF40">
    <property type="entry name" value="PHENYLALANINE--TRNA LIGASE ALPHA SUBUNIT"/>
    <property type="match status" value="1"/>
</dbReference>
<dbReference type="PANTHER" id="PTHR11538">
    <property type="entry name" value="PHENYLALANYL-TRNA SYNTHETASE"/>
    <property type="match status" value="1"/>
</dbReference>
<dbReference type="Pfam" id="PF01409">
    <property type="entry name" value="tRNA-synt_2d"/>
    <property type="match status" value="1"/>
</dbReference>
<dbReference type="SUPFAM" id="SSF55681">
    <property type="entry name" value="Class II aaRS and biotin synthetases"/>
    <property type="match status" value="1"/>
</dbReference>
<dbReference type="SUPFAM" id="SSF46785">
    <property type="entry name" value="Winged helix' DNA-binding domain"/>
    <property type="match status" value="1"/>
</dbReference>
<dbReference type="PROSITE" id="PS50862">
    <property type="entry name" value="AA_TRNA_LIGASE_II"/>
    <property type="match status" value="1"/>
</dbReference>
<protein>
    <recommendedName>
        <fullName evidence="1">Phenylalanine--tRNA ligase alpha subunit</fullName>
        <ecNumber evidence="1">6.1.1.20</ecNumber>
    </recommendedName>
    <alternativeName>
        <fullName evidence="1">Phenylalanyl-tRNA synthetase alpha subunit</fullName>
        <shortName evidence="1">PheRS</shortName>
    </alternativeName>
</protein>
<sequence length="499" mass="57751">MLGYNEKLVLLKLNEVKKARIEELVKLTGLEQVAIMRALLTLEKEGLAKISERKERIIRLTDLGRKYIQMGLPEIRALNVLKSKKKVKLDELRGVLTEDELKPIVGILRKEGWVKVEKTPEGLVLEITERGENPEERPIDKALKILSEKEYATSEEISKIVPINELKRRKVAQEEEVVERIAEITEKGVELVKKGIELKREVTSLTPELIASGKWREVEFKPFNIKAPVKKIYPGKKQPYRVFLDKIRRKLIEMGFIEITVDSLIETQFWNFDALFQPQNHPAREWTDTYQLKYPEKGYLPNRELVERVKEAHERGLAGSRGWGYVWSPERAMFLMPRAHATALSARQLAKGIEIPGKYFTIQRVFRPDVLDRTHLIEFNQIDGFVAAEDLTFRHLLGILKKFAIEIAGAKKVKFFPDYYPFTEPSVQLSAYHPELGWVEFGGAGVFREEMTKALGIDVPVIAWGIGIDRLAMFRLGIDDIRYLFSYDLKWLREAKLIW</sequence>
<gene>
    <name evidence="1" type="primary">pheS</name>
    <name type="ordered locus">PF0989</name>
</gene>
<proteinExistence type="inferred from homology"/>
<comment type="catalytic activity">
    <reaction evidence="1">
        <text>tRNA(Phe) + L-phenylalanine + ATP = L-phenylalanyl-tRNA(Phe) + AMP + diphosphate + H(+)</text>
        <dbReference type="Rhea" id="RHEA:19413"/>
        <dbReference type="Rhea" id="RHEA-COMP:9668"/>
        <dbReference type="Rhea" id="RHEA-COMP:9699"/>
        <dbReference type="ChEBI" id="CHEBI:15378"/>
        <dbReference type="ChEBI" id="CHEBI:30616"/>
        <dbReference type="ChEBI" id="CHEBI:33019"/>
        <dbReference type="ChEBI" id="CHEBI:58095"/>
        <dbReference type="ChEBI" id="CHEBI:78442"/>
        <dbReference type="ChEBI" id="CHEBI:78531"/>
        <dbReference type="ChEBI" id="CHEBI:456215"/>
        <dbReference type="EC" id="6.1.1.20"/>
    </reaction>
</comment>
<comment type="cofactor">
    <cofactor evidence="1">
        <name>Mg(2+)</name>
        <dbReference type="ChEBI" id="CHEBI:18420"/>
    </cofactor>
    <text evidence="1">Binds 2 magnesium ions per tetramer.</text>
</comment>
<comment type="subunit">
    <text evidence="1">Tetramer of two alpha and two beta subunits.</text>
</comment>
<comment type="subcellular location">
    <subcellularLocation>
        <location evidence="1">Cytoplasm</location>
    </subcellularLocation>
</comment>
<comment type="similarity">
    <text evidence="1">Belongs to the class-II aminoacyl-tRNA synthetase family. Phe-tRNA synthetase alpha subunit type 2 subfamily.</text>
</comment>
<organism>
    <name type="scientific">Pyrococcus furiosus (strain ATCC 43587 / DSM 3638 / JCM 8422 / Vc1)</name>
    <dbReference type="NCBI Taxonomy" id="186497"/>
    <lineage>
        <taxon>Archaea</taxon>
        <taxon>Methanobacteriati</taxon>
        <taxon>Methanobacteriota</taxon>
        <taxon>Thermococci</taxon>
        <taxon>Thermococcales</taxon>
        <taxon>Thermococcaceae</taxon>
        <taxon>Pyrococcus</taxon>
    </lineage>
</organism>